<reference key="1">
    <citation type="journal article" date="2009" name="J. Bacteriol.">
        <title>The genome of Burkholderia cenocepacia J2315, an epidemic pathogen of cystic fibrosis patients.</title>
        <authorList>
            <person name="Holden M.T."/>
            <person name="Seth-Smith H.M."/>
            <person name="Crossman L.C."/>
            <person name="Sebaihia M."/>
            <person name="Bentley S.D."/>
            <person name="Cerdeno-Tarraga A.M."/>
            <person name="Thomson N.R."/>
            <person name="Bason N."/>
            <person name="Quail M.A."/>
            <person name="Sharp S."/>
            <person name="Cherevach I."/>
            <person name="Churcher C."/>
            <person name="Goodhead I."/>
            <person name="Hauser H."/>
            <person name="Holroyd N."/>
            <person name="Mungall K."/>
            <person name="Scott P."/>
            <person name="Walker D."/>
            <person name="White B."/>
            <person name="Rose H."/>
            <person name="Iversen P."/>
            <person name="Mil-Homens D."/>
            <person name="Rocha E.P."/>
            <person name="Fialho A.M."/>
            <person name="Baldwin A."/>
            <person name="Dowson C."/>
            <person name="Barrell B.G."/>
            <person name="Govan J.R."/>
            <person name="Vandamme P."/>
            <person name="Hart C.A."/>
            <person name="Mahenthiralingam E."/>
            <person name="Parkhill J."/>
        </authorList>
    </citation>
    <scope>NUCLEOTIDE SEQUENCE [LARGE SCALE GENOMIC DNA]</scope>
    <source>
        <strain>ATCC BAA-245 / DSM 16553 / LMG 16656 / NCTC 13227 / J2315 / CF5610</strain>
    </source>
</reference>
<gene>
    <name evidence="1" type="primary">pheS</name>
    <name type="ordered locus">BceJ2315_14510</name>
    <name type="ORF">BCAL1485</name>
</gene>
<keyword id="KW-0030">Aminoacyl-tRNA synthetase</keyword>
<keyword id="KW-0067">ATP-binding</keyword>
<keyword id="KW-0963">Cytoplasm</keyword>
<keyword id="KW-0436">Ligase</keyword>
<keyword id="KW-0460">Magnesium</keyword>
<keyword id="KW-0479">Metal-binding</keyword>
<keyword id="KW-0547">Nucleotide-binding</keyword>
<keyword id="KW-0648">Protein biosynthesis</keyword>
<organism>
    <name type="scientific">Burkholderia cenocepacia (strain ATCC BAA-245 / DSM 16553 / LMG 16656 / NCTC 13227 / J2315 / CF5610)</name>
    <name type="common">Burkholderia cepacia (strain J2315)</name>
    <dbReference type="NCBI Taxonomy" id="216591"/>
    <lineage>
        <taxon>Bacteria</taxon>
        <taxon>Pseudomonadati</taxon>
        <taxon>Pseudomonadota</taxon>
        <taxon>Betaproteobacteria</taxon>
        <taxon>Burkholderiales</taxon>
        <taxon>Burkholderiaceae</taxon>
        <taxon>Burkholderia</taxon>
        <taxon>Burkholderia cepacia complex</taxon>
    </lineage>
</organism>
<feature type="chain" id="PRO_1000114851" description="Phenylalanine--tRNA ligase alpha subunit">
    <location>
        <begin position="1"/>
        <end position="337"/>
    </location>
</feature>
<feature type="binding site" evidence="1">
    <location>
        <position position="258"/>
    </location>
    <ligand>
        <name>Mg(2+)</name>
        <dbReference type="ChEBI" id="CHEBI:18420"/>
        <note>shared with beta subunit</note>
    </ligand>
</feature>
<name>SYFA_BURCJ</name>
<comment type="catalytic activity">
    <reaction evidence="1">
        <text>tRNA(Phe) + L-phenylalanine + ATP = L-phenylalanyl-tRNA(Phe) + AMP + diphosphate + H(+)</text>
        <dbReference type="Rhea" id="RHEA:19413"/>
        <dbReference type="Rhea" id="RHEA-COMP:9668"/>
        <dbReference type="Rhea" id="RHEA-COMP:9699"/>
        <dbReference type="ChEBI" id="CHEBI:15378"/>
        <dbReference type="ChEBI" id="CHEBI:30616"/>
        <dbReference type="ChEBI" id="CHEBI:33019"/>
        <dbReference type="ChEBI" id="CHEBI:58095"/>
        <dbReference type="ChEBI" id="CHEBI:78442"/>
        <dbReference type="ChEBI" id="CHEBI:78531"/>
        <dbReference type="ChEBI" id="CHEBI:456215"/>
        <dbReference type="EC" id="6.1.1.20"/>
    </reaction>
</comment>
<comment type="cofactor">
    <cofactor evidence="1">
        <name>Mg(2+)</name>
        <dbReference type="ChEBI" id="CHEBI:18420"/>
    </cofactor>
    <text evidence="1">Binds 2 magnesium ions per tetramer.</text>
</comment>
<comment type="subunit">
    <text evidence="1">Tetramer of two alpha and two beta subunits.</text>
</comment>
<comment type="subcellular location">
    <subcellularLocation>
        <location evidence="1">Cytoplasm</location>
    </subcellularLocation>
</comment>
<comment type="similarity">
    <text evidence="1">Belongs to the class-II aminoacyl-tRNA synthetase family. Phe-tRNA synthetase alpha subunit type 1 subfamily.</text>
</comment>
<protein>
    <recommendedName>
        <fullName evidence="1">Phenylalanine--tRNA ligase alpha subunit</fullName>
        <ecNumber evidence="1">6.1.1.20</ecNumber>
    </recommendedName>
    <alternativeName>
        <fullName evidence="1">Phenylalanyl-tRNA synthetase alpha subunit</fullName>
        <shortName evidence="1">PheRS</shortName>
    </alternativeName>
</protein>
<accession>B4E7I9</accession>
<sequence>MDLDQIVADAQQSFEQAADITTLENEKARFLGKSGALTELLKGLGKLDPEARKTEGARINVAKQQVEAALTARRQALADALLNQRLTAEAIDVTLPGRGAGAGSLHPVMRTWERVEQIFGSIGFDVADGPEIETDWYNFTSLNSPENHPARSMQDTFYVEGKDADGRQLLLRTHTSPMQVRYARMNRPPIKVIAPGRTYRVDSDATHSPMFNQVEGLWIDENISFADLKGVYTDFLKKFFERDDILVRFRPSYFPFTEPSAEIDMMFEQGKNAGKWLEISGSGQVHPTVIRNMGLDPERYIGFAFGSGLERLTMLRYGVQDLRLFFENDLRFLRQFA</sequence>
<evidence type="ECO:0000255" key="1">
    <source>
        <dbReference type="HAMAP-Rule" id="MF_00281"/>
    </source>
</evidence>
<proteinExistence type="inferred from homology"/>
<dbReference type="EC" id="6.1.1.20" evidence="1"/>
<dbReference type="EMBL" id="AM747720">
    <property type="protein sequence ID" value="CAR51784.1"/>
    <property type="molecule type" value="Genomic_DNA"/>
</dbReference>
<dbReference type="RefSeq" id="WP_006486107.1">
    <property type="nucleotide sequence ID" value="NC_011000.1"/>
</dbReference>
<dbReference type="SMR" id="B4E7I9"/>
<dbReference type="GeneID" id="93192253"/>
<dbReference type="KEGG" id="bcj:BCAL1485"/>
<dbReference type="eggNOG" id="COG0016">
    <property type="taxonomic scope" value="Bacteria"/>
</dbReference>
<dbReference type="HOGENOM" id="CLU_025086_0_1_4"/>
<dbReference type="Proteomes" id="UP000001035">
    <property type="component" value="Chromosome 1"/>
</dbReference>
<dbReference type="GO" id="GO:0005737">
    <property type="term" value="C:cytoplasm"/>
    <property type="evidence" value="ECO:0007669"/>
    <property type="project" value="UniProtKB-SubCell"/>
</dbReference>
<dbReference type="GO" id="GO:0005524">
    <property type="term" value="F:ATP binding"/>
    <property type="evidence" value="ECO:0007669"/>
    <property type="project" value="UniProtKB-UniRule"/>
</dbReference>
<dbReference type="GO" id="GO:0000287">
    <property type="term" value="F:magnesium ion binding"/>
    <property type="evidence" value="ECO:0007669"/>
    <property type="project" value="UniProtKB-UniRule"/>
</dbReference>
<dbReference type="GO" id="GO:0004826">
    <property type="term" value="F:phenylalanine-tRNA ligase activity"/>
    <property type="evidence" value="ECO:0007669"/>
    <property type="project" value="UniProtKB-UniRule"/>
</dbReference>
<dbReference type="GO" id="GO:0000049">
    <property type="term" value="F:tRNA binding"/>
    <property type="evidence" value="ECO:0007669"/>
    <property type="project" value="InterPro"/>
</dbReference>
<dbReference type="GO" id="GO:0006432">
    <property type="term" value="P:phenylalanyl-tRNA aminoacylation"/>
    <property type="evidence" value="ECO:0007669"/>
    <property type="project" value="UniProtKB-UniRule"/>
</dbReference>
<dbReference type="CDD" id="cd00496">
    <property type="entry name" value="PheRS_alpha_core"/>
    <property type="match status" value="1"/>
</dbReference>
<dbReference type="FunFam" id="3.30.930.10:FF:000003">
    <property type="entry name" value="Phenylalanine--tRNA ligase alpha subunit"/>
    <property type="match status" value="1"/>
</dbReference>
<dbReference type="Gene3D" id="3.30.930.10">
    <property type="entry name" value="Bira Bifunctional Protein, Domain 2"/>
    <property type="match status" value="1"/>
</dbReference>
<dbReference type="HAMAP" id="MF_00281">
    <property type="entry name" value="Phe_tRNA_synth_alpha1"/>
    <property type="match status" value="1"/>
</dbReference>
<dbReference type="InterPro" id="IPR006195">
    <property type="entry name" value="aa-tRNA-synth_II"/>
</dbReference>
<dbReference type="InterPro" id="IPR045864">
    <property type="entry name" value="aa-tRNA-synth_II/BPL/LPL"/>
</dbReference>
<dbReference type="InterPro" id="IPR004529">
    <property type="entry name" value="Phe-tRNA-synth_IIc_asu"/>
</dbReference>
<dbReference type="InterPro" id="IPR004188">
    <property type="entry name" value="Phe-tRNA_ligase_II_N"/>
</dbReference>
<dbReference type="InterPro" id="IPR022911">
    <property type="entry name" value="Phe_tRNA_ligase_alpha1_bac"/>
</dbReference>
<dbReference type="InterPro" id="IPR002319">
    <property type="entry name" value="Phenylalanyl-tRNA_Synthase"/>
</dbReference>
<dbReference type="InterPro" id="IPR010978">
    <property type="entry name" value="tRNA-bd_arm"/>
</dbReference>
<dbReference type="NCBIfam" id="TIGR00468">
    <property type="entry name" value="pheS"/>
    <property type="match status" value="1"/>
</dbReference>
<dbReference type="PANTHER" id="PTHR11538:SF41">
    <property type="entry name" value="PHENYLALANINE--TRNA LIGASE, MITOCHONDRIAL"/>
    <property type="match status" value="1"/>
</dbReference>
<dbReference type="PANTHER" id="PTHR11538">
    <property type="entry name" value="PHENYLALANYL-TRNA SYNTHETASE"/>
    <property type="match status" value="1"/>
</dbReference>
<dbReference type="Pfam" id="PF02912">
    <property type="entry name" value="Phe_tRNA-synt_N"/>
    <property type="match status" value="1"/>
</dbReference>
<dbReference type="Pfam" id="PF01409">
    <property type="entry name" value="tRNA-synt_2d"/>
    <property type="match status" value="1"/>
</dbReference>
<dbReference type="SUPFAM" id="SSF55681">
    <property type="entry name" value="Class II aaRS and biotin synthetases"/>
    <property type="match status" value="1"/>
</dbReference>
<dbReference type="SUPFAM" id="SSF46589">
    <property type="entry name" value="tRNA-binding arm"/>
    <property type="match status" value="1"/>
</dbReference>
<dbReference type="PROSITE" id="PS50862">
    <property type="entry name" value="AA_TRNA_LIGASE_II"/>
    <property type="match status" value="1"/>
</dbReference>